<keyword id="KW-0997">Cell inner membrane</keyword>
<keyword id="KW-1003">Cell membrane</keyword>
<keyword id="KW-0472">Membrane</keyword>
<keyword id="KW-0812">Transmembrane</keyword>
<keyword id="KW-1133">Transmembrane helix</keyword>
<organism>
    <name type="scientific">Vibrio atlanticus (strain LGP32)</name>
    <name type="common">Vibrio splendidus (strain Mel32)</name>
    <dbReference type="NCBI Taxonomy" id="575788"/>
    <lineage>
        <taxon>Bacteria</taxon>
        <taxon>Pseudomonadati</taxon>
        <taxon>Pseudomonadota</taxon>
        <taxon>Gammaproteobacteria</taxon>
        <taxon>Vibrionales</taxon>
        <taxon>Vibrionaceae</taxon>
        <taxon>Vibrio</taxon>
    </lineage>
</organism>
<name>YCIB_VIBA3</name>
<sequence>MKQILDFIPLIIFFALYKMYDIYTATGALIVASAVQIILTYFIYKKVEKMQVITFLMVAVFGGMTIFLHDDNFIKWKVTIVYALFAIGLTVSHIMGKSAIKGMLGKEITLPDSIWGKINWAWTLFFTLCAILNVYVAFNLPLDVWVNFKVFGLLIATFAFTLLTGVYIYKHLPKDQHLPKDKHQQRDQETQNDTQQELSGKNTEEK</sequence>
<proteinExistence type="inferred from homology"/>
<dbReference type="EMBL" id="FM954972">
    <property type="protein sequence ID" value="CAV18275.1"/>
    <property type="molecule type" value="Genomic_DNA"/>
</dbReference>
<dbReference type="STRING" id="575788.VS_1149"/>
<dbReference type="KEGG" id="vsp:VS_1149"/>
<dbReference type="PATRIC" id="fig|575788.5.peg.2472"/>
<dbReference type="eggNOG" id="COG2917">
    <property type="taxonomic scope" value="Bacteria"/>
</dbReference>
<dbReference type="HOGENOM" id="CLU_089554_2_0_6"/>
<dbReference type="Proteomes" id="UP000009100">
    <property type="component" value="Chromosome 1"/>
</dbReference>
<dbReference type="GO" id="GO:0005886">
    <property type="term" value="C:plasma membrane"/>
    <property type="evidence" value="ECO:0007669"/>
    <property type="project" value="UniProtKB-SubCell"/>
</dbReference>
<dbReference type="HAMAP" id="MF_00189">
    <property type="entry name" value="YciB"/>
    <property type="match status" value="1"/>
</dbReference>
<dbReference type="InterPro" id="IPR006008">
    <property type="entry name" value="YciB"/>
</dbReference>
<dbReference type="NCBIfam" id="TIGR00997">
    <property type="entry name" value="ispZ"/>
    <property type="match status" value="1"/>
</dbReference>
<dbReference type="NCBIfam" id="NF001324">
    <property type="entry name" value="PRK00259.1-2"/>
    <property type="match status" value="1"/>
</dbReference>
<dbReference type="NCBIfam" id="NF001325">
    <property type="entry name" value="PRK00259.1-3"/>
    <property type="match status" value="1"/>
</dbReference>
<dbReference type="PANTHER" id="PTHR36917:SF1">
    <property type="entry name" value="INNER MEMBRANE-SPANNING PROTEIN YCIB"/>
    <property type="match status" value="1"/>
</dbReference>
<dbReference type="PANTHER" id="PTHR36917">
    <property type="entry name" value="INTRACELLULAR SEPTATION PROTEIN A-RELATED"/>
    <property type="match status" value="1"/>
</dbReference>
<dbReference type="Pfam" id="PF04279">
    <property type="entry name" value="IspA"/>
    <property type="match status" value="1"/>
</dbReference>
<accession>B7VMM4</accession>
<gene>
    <name evidence="1" type="primary">yciB</name>
    <name type="ordered locus">VS_1149</name>
</gene>
<feature type="chain" id="PRO_1000124263" description="Inner membrane-spanning protein YciB">
    <location>
        <begin position="1"/>
        <end position="206"/>
    </location>
</feature>
<feature type="transmembrane region" description="Helical" evidence="1">
    <location>
        <begin position="22"/>
        <end position="42"/>
    </location>
</feature>
<feature type="transmembrane region" description="Helical" evidence="1">
    <location>
        <begin position="50"/>
        <end position="70"/>
    </location>
</feature>
<feature type="transmembrane region" description="Helical" evidence="1">
    <location>
        <begin position="76"/>
        <end position="96"/>
    </location>
</feature>
<feature type="transmembrane region" description="Helical" evidence="1">
    <location>
        <begin position="118"/>
        <end position="138"/>
    </location>
</feature>
<feature type="transmembrane region" description="Helical" evidence="1">
    <location>
        <begin position="148"/>
        <end position="168"/>
    </location>
</feature>
<feature type="region of interest" description="Disordered" evidence="2">
    <location>
        <begin position="178"/>
        <end position="206"/>
    </location>
</feature>
<feature type="compositionally biased region" description="Basic and acidic residues" evidence="2">
    <location>
        <begin position="178"/>
        <end position="189"/>
    </location>
</feature>
<feature type="compositionally biased region" description="Polar residues" evidence="2">
    <location>
        <begin position="191"/>
        <end position="206"/>
    </location>
</feature>
<evidence type="ECO:0000255" key="1">
    <source>
        <dbReference type="HAMAP-Rule" id="MF_00189"/>
    </source>
</evidence>
<evidence type="ECO:0000256" key="2">
    <source>
        <dbReference type="SAM" id="MobiDB-lite"/>
    </source>
</evidence>
<protein>
    <recommendedName>
        <fullName evidence="1">Inner membrane-spanning protein YciB</fullName>
    </recommendedName>
</protein>
<comment type="function">
    <text evidence="1">Plays a role in cell envelope biogenesis, maintenance of cell envelope integrity and membrane homeostasis.</text>
</comment>
<comment type="subcellular location">
    <subcellularLocation>
        <location evidence="1">Cell inner membrane</location>
        <topology evidence="1">Multi-pass membrane protein</topology>
    </subcellularLocation>
</comment>
<comment type="similarity">
    <text evidence="1">Belongs to the YciB family.</text>
</comment>
<reference key="1">
    <citation type="submission" date="2009-02" db="EMBL/GenBank/DDBJ databases">
        <title>Vibrio splendidus str. LGP32 complete genome.</title>
        <authorList>
            <person name="Mazel D."/>
            <person name="Le Roux F."/>
        </authorList>
    </citation>
    <scope>NUCLEOTIDE SEQUENCE [LARGE SCALE GENOMIC DNA]</scope>
    <source>
        <strain>LGP32</strain>
    </source>
</reference>